<comment type="function">
    <text evidence="1">Involved in the biosynthesis of the chorismate, which leads to the biosynthesis of aromatic amino acids. Catalyzes the reversible NADPH linked reduction of 3-dehydroshikimate (DHSA) to yield shikimate (SA).</text>
</comment>
<comment type="catalytic activity">
    <reaction evidence="1">
        <text>shikimate + NADP(+) = 3-dehydroshikimate + NADPH + H(+)</text>
        <dbReference type="Rhea" id="RHEA:17737"/>
        <dbReference type="ChEBI" id="CHEBI:15378"/>
        <dbReference type="ChEBI" id="CHEBI:16630"/>
        <dbReference type="ChEBI" id="CHEBI:36208"/>
        <dbReference type="ChEBI" id="CHEBI:57783"/>
        <dbReference type="ChEBI" id="CHEBI:58349"/>
        <dbReference type="EC" id="1.1.1.25"/>
    </reaction>
</comment>
<comment type="pathway">
    <text evidence="1">Metabolic intermediate biosynthesis; chorismate biosynthesis; chorismate from D-erythrose 4-phosphate and phosphoenolpyruvate: step 4/7.</text>
</comment>
<comment type="subunit">
    <text evidence="1">Homodimer.</text>
</comment>
<comment type="similarity">
    <text evidence="1">Belongs to the shikimate dehydrogenase family.</text>
</comment>
<name>AROE_YERPN</name>
<dbReference type="EC" id="1.1.1.25" evidence="1"/>
<dbReference type="EMBL" id="CP000305">
    <property type="protein sequence ID" value="ABG20149.1"/>
    <property type="molecule type" value="Genomic_DNA"/>
</dbReference>
<dbReference type="EMBL" id="ACNQ01000019">
    <property type="protein sequence ID" value="EEO74736.1"/>
    <property type="molecule type" value="Genomic_DNA"/>
</dbReference>
<dbReference type="RefSeq" id="WP_002209026.1">
    <property type="nucleotide sequence ID" value="NZ_ACNQ01000019.1"/>
</dbReference>
<dbReference type="SMR" id="Q1CCY1"/>
<dbReference type="GeneID" id="57974357"/>
<dbReference type="KEGG" id="ypn:YPN_3822"/>
<dbReference type="HOGENOM" id="CLU_044063_2_1_6"/>
<dbReference type="UniPathway" id="UPA00053">
    <property type="reaction ID" value="UER00087"/>
</dbReference>
<dbReference type="Proteomes" id="UP000008936">
    <property type="component" value="Chromosome"/>
</dbReference>
<dbReference type="GO" id="GO:0005829">
    <property type="term" value="C:cytosol"/>
    <property type="evidence" value="ECO:0007669"/>
    <property type="project" value="TreeGrafter"/>
</dbReference>
<dbReference type="GO" id="GO:0050661">
    <property type="term" value="F:NADP binding"/>
    <property type="evidence" value="ECO:0007669"/>
    <property type="project" value="InterPro"/>
</dbReference>
<dbReference type="GO" id="GO:0004764">
    <property type="term" value="F:shikimate 3-dehydrogenase (NADP+) activity"/>
    <property type="evidence" value="ECO:0007669"/>
    <property type="project" value="UniProtKB-UniRule"/>
</dbReference>
<dbReference type="GO" id="GO:0008652">
    <property type="term" value="P:amino acid biosynthetic process"/>
    <property type="evidence" value="ECO:0007669"/>
    <property type="project" value="UniProtKB-KW"/>
</dbReference>
<dbReference type="GO" id="GO:0009073">
    <property type="term" value="P:aromatic amino acid family biosynthetic process"/>
    <property type="evidence" value="ECO:0007669"/>
    <property type="project" value="UniProtKB-KW"/>
</dbReference>
<dbReference type="GO" id="GO:0009423">
    <property type="term" value="P:chorismate biosynthetic process"/>
    <property type="evidence" value="ECO:0007669"/>
    <property type="project" value="UniProtKB-UniRule"/>
</dbReference>
<dbReference type="GO" id="GO:0019632">
    <property type="term" value="P:shikimate metabolic process"/>
    <property type="evidence" value="ECO:0007669"/>
    <property type="project" value="InterPro"/>
</dbReference>
<dbReference type="CDD" id="cd01065">
    <property type="entry name" value="NAD_bind_Shikimate_DH"/>
    <property type="match status" value="1"/>
</dbReference>
<dbReference type="FunFam" id="3.40.50.10860:FF:000006">
    <property type="entry name" value="Shikimate dehydrogenase (NADP(+))"/>
    <property type="match status" value="1"/>
</dbReference>
<dbReference type="FunFam" id="3.40.50.720:FF:000104">
    <property type="entry name" value="Shikimate dehydrogenase (NADP(+))"/>
    <property type="match status" value="1"/>
</dbReference>
<dbReference type="Gene3D" id="3.40.50.10860">
    <property type="entry name" value="Leucine Dehydrogenase, chain A, domain 1"/>
    <property type="match status" value="1"/>
</dbReference>
<dbReference type="Gene3D" id="3.40.50.720">
    <property type="entry name" value="NAD(P)-binding Rossmann-like Domain"/>
    <property type="match status" value="1"/>
</dbReference>
<dbReference type="HAMAP" id="MF_00222">
    <property type="entry name" value="Shikimate_DH_AroE"/>
    <property type="match status" value="1"/>
</dbReference>
<dbReference type="InterPro" id="IPR046346">
    <property type="entry name" value="Aminoacid_DH-like_N_sf"/>
</dbReference>
<dbReference type="InterPro" id="IPR036291">
    <property type="entry name" value="NAD(P)-bd_dom_sf"/>
</dbReference>
<dbReference type="InterPro" id="IPR041121">
    <property type="entry name" value="SDH_C"/>
</dbReference>
<dbReference type="InterPro" id="IPR011342">
    <property type="entry name" value="Shikimate_DH"/>
</dbReference>
<dbReference type="InterPro" id="IPR013708">
    <property type="entry name" value="Shikimate_DH-bd_N"/>
</dbReference>
<dbReference type="InterPro" id="IPR022893">
    <property type="entry name" value="Shikimate_DH_fam"/>
</dbReference>
<dbReference type="InterPro" id="IPR006151">
    <property type="entry name" value="Shikm_DH/Glu-tRNA_Rdtase"/>
</dbReference>
<dbReference type="NCBIfam" id="TIGR00507">
    <property type="entry name" value="aroE"/>
    <property type="match status" value="1"/>
</dbReference>
<dbReference type="NCBIfam" id="NF001310">
    <property type="entry name" value="PRK00258.1-2"/>
    <property type="match status" value="1"/>
</dbReference>
<dbReference type="PANTHER" id="PTHR21089:SF1">
    <property type="entry name" value="BIFUNCTIONAL 3-DEHYDROQUINATE DEHYDRATASE_SHIKIMATE DEHYDROGENASE, CHLOROPLASTIC"/>
    <property type="match status" value="1"/>
</dbReference>
<dbReference type="PANTHER" id="PTHR21089">
    <property type="entry name" value="SHIKIMATE DEHYDROGENASE"/>
    <property type="match status" value="1"/>
</dbReference>
<dbReference type="Pfam" id="PF18317">
    <property type="entry name" value="SDH_C"/>
    <property type="match status" value="1"/>
</dbReference>
<dbReference type="Pfam" id="PF01488">
    <property type="entry name" value="Shikimate_DH"/>
    <property type="match status" value="1"/>
</dbReference>
<dbReference type="Pfam" id="PF08501">
    <property type="entry name" value="Shikimate_dh_N"/>
    <property type="match status" value="1"/>
</dbReference>
<dbReference type="SUPFAM" id="SSF53223">
    <property type="entry name" value="Aminoacid dehydrogenase-like, N-terminal domain"/>
    <property type="match status" value="1"/>
</dbReference>
<dbReference type="SUPFAM" id="SSF51735">
    <property type="entry name" value="NAD(P)-binding Rossmann-fold domains"/>
    <property type="match status" value="1"/>
</dbReference>
<proteinExistence type="inferred from homology"/>
<gene>
    <name evidence="1" type="primary">aroE</name>
    <name type="ordered locus">YPN_3822</name>
    <name type="ORF">YP516_4344</name>
</gene>
<evidence type="ECO:0000255" key="1">
    <source>
        <dbReference type="HAMAP-Rule" id="MF_00222"/>
    </source>
</evidence>
<organism>
    <name type="scientific">Yersinia pestis bv. Antiqua (strain Nepal516)</name>
    <dbReference type="NCBI Taxonomy" id="377628"/>
    <lineage>
        <taxon>Bacteria</taxon>
        <taxon>Pseudomonadati</taxon>
        <taxon>Pseudomonadota</taxon>
        <taxon>Gammaproteobacteria</taxon>
        <taxon>Enterobacterales</taxon>
        <taxon>Yersiniaceae</taxon>
        <taxon>Yersinia</taxon>
    </lineage>
</organism>
<protein>
    <recommendedName>
        <fullName evidence="1">Shikimate dehydrogenase (NADP(+))</fullName>
        <shortName evidence="1">SDH</shortName>
        <ecNumber evidence="1">1.1.1.25</ecNumber>
    </recommendedName>
</protein>
<keyword id="KW-0028">Amino-acid biosynthesis</keyword>
<keyword id="KW-0057">Aromatic amino acid biosynthesis</keyword>
<keyword id="KW-0521">NADP</keyword>
<keyword id="KW-0560">Oxidoreductase</keyword>
<reference key="1">
    <citation type="journal article" date="2006" name="J. Bacteriol.">
        <title>Complete genome sequence of Yersinia pestis strains Antiqua and Nepal516: evidence of gene reduction in an emerging pathogen.</title>
        <authorList>
            <person name="Chain P.S.G."/>
            <person name="Hu P."/>
            <person name="Malfatti S.A."/>
            <person name="Radnedge L."/>
            <person name="Larimer F."/>
            <person name="Vergez L.M."/>
            <person name="Worsham P."/>
            <person name="Chu M.C."/>
            <person name="Andersen G.L."/>
        </authorList>
    </citation>
    <scope>NUCLEOTIDE SEQUENCE [LARGE SCALE GENOMIC DNA]</scope>
    <source>
        <strain>Nepal516</strain>
    </source>
</reference>
<reference key="2">
    <citation type="submission" date="2009-04" db="EMBL/GenBank/DDBJ databases">
        <title>Yersinia pestis Nepal516A whole genome shotgun sequencing project.</title>
        <authorList>
            <person name="Plunkett G. III"/>
            <person name="Anderson B.D."/>
            <person name="Baumler D.J."/>
            <person name="Burland V."/>
            <person name="Cabot E.L."/>
            <person name="Glasner J.D."/>
            <person name="Mau B."/>
            <person name="Neeno-Eckwall E."/>
            <person name="Perna N.T."/>
            <person name="Munk A.C."/>
            <person name="Tapia R."/>
            <person name="Green L.D."/>
            <person name="Rogers Y.C."/>
            <person name="Detter J.C."/>
            <person name="Bruce D.C."/>
            <person name="Brettin T.S."/>
        </authorList>
    </citation>
    <scope>NUCLEOTIDE SEQUENCE [LARGE SCALE GENOMIC DNA]</scope>
    <source>
        <strain>Nepal516</strain>
    </source>
</reference>
<sequence>MDQKFAVFGNPISHSKSPRIHTLFSEQTGIEHRYGKVLAPSEAFENTLVSFFADGAQGANITTPFKERAYDQCDELTDRASLAGAVNTIKRLEDGRLLGDNTDGIGLLSDLERQNLIRTTDHILLVGAGGAARGVILPLLSYGCTVVVTNRTHTRAQQLAKVFNHIGDIDVCEMSELAGQRFDLVINATASGLHGEVPNLPAAILTSQTRCYDMFYQAGTTPFLAWAQRLGLADYADGLGMLVGQAAHAFKLWHGVMPEITPVLAQLRSELGK</sequence>
<accession>Q1CCY1</accession>
<accession>D1Q2I3</accession>
<feature type="chain" id="PRO_1000021366" description="Shikimate dehydrogenase (NADP(+))">
    <location>
        <begin position="1"/>
        <end position="273"/>
    </location>
</feature>
<feature type="active site" description="Proton acceptor" evidence="1">
    <location>
        <position position="66"/>
    </location>
</feature>
<feature type="binding site" evidence="1">
    <location>
        <begin position="15"/>
        <end position="17"/>
    </location>
    <ligand>
        <name>shikimate</name>
        <dbReference type="ChEBI" id="CHEBI:36208"/>
    </ligand>
</feature>
<feature type="binding site" evidence="1">
    <location>
        <position position="62"/>
    </location>
    <ligand>
        <name>shikimate</name>
        <dbReference type="ChEBI" id="CHEBI:36208"/>
    </ligand>
</feature>
<feature type="binding site" evidence="1">
    <location>
        <position position="78"/>
    </location>
    <ligand>
        <name>NADP(+)</name>
        <dbReference type="ChEBI" id="CHEBI:58349"/>
    </ligand>
</feature>
<feature type="binding site" evidence="1">
    <location>
        <position position="87"/>
    </location>
    <ligand>
        <name>shikimate</name>
        <dbReference type="ChEBI" id="CHEBI:36208"/>
    </ligand>
</feature>
<feature type="binding site" evidence="1">
    <location>
        <position position="103"/>
    </location>
    <ligand>
        <name>shikimate</name>
        <dbReference type="ChEBI" id="CHEBI:36208"/>
    </ligand>
</feature>
<feature type="binding site" evidence="1">
    <location>
        <begin position="127"/>
        <end position="131"/>
    </location>
    <ligand>
        <name>NADP(+)</name>
        <dbReference type="ChEBI" id="CHEBI:58349"/>
    </ligand>
</feature>
<feature type="binding site" evidence="1">
    <location>
        <begin position="150"/>
        <end position="155"/>
    </location>
    <ligand>
        <name>NADP(+)</name>
        <dbReference type="ChEBI" id="CHEBI:58349"/>
    </ligand>
</feature>
<feature type="binding site" evidence="1">
    <location>
        <position position="218"/>
    </location>
    <ligand>
        <name>NADP(+)</name>
        <dbReference type="ChEBI" id="CHEBI:58349"/>
    </ligand>
</feature>
<feature type="binding site" evidence="1">
    <location>
        <position position="238"/>
    </location>
    <ligand>
        <name>NADP(+)</name>
        <dbReference type="ChEBI" id="CHEBI:58349"/>
    </ligand>
</feature>